<name>YBJL_ECOBW</name>
<organism>
    <name type="scientific">Escherichia coli (strain K12 / MC4100 / BW2952)</name>
    <dbReference type="NCBI Taxonomy" id="595496"/>
    <lineage>
        <taxon>Bacteria</taxon>
        <taxon>Pseudomonadati</taxon>
        <taxon>Pseudomonadota</taxon>
        <taxon>Gammaproteobacteria</taxon>
        <taxon>Enterobacterales</taxon>
        <taxon>Enterobacteriaceae</taxon>
        <taxon>Escherichia</taxon>
    </lineage>
</organism>
<accession>C4ZY19</accession>
<gene>
    <name evidence="1" type="primary">ybjL</name>
    <name type="ordered locus">BWG_0700</name>
</gene>
<protein>
    <recommendedName>
        <fullName evidence="1">Putative transport protein YbjL</fullName>
    </recommendedName>
</protein>
<evidence type="ECO:0000255" key="1">
    <source>
        <dbReference type="HAMAP-Rule" id="MF_01015"/>
    </source>
</evidence>
<sequence length="561" mass="60351">MNINVAELLNGNYILLLFVVLALGLCLGKLRLGSIQLGNSIGVLVVSLLLGQQHFSINTDALNLGFMLFIFCVGVEAGPNFFSIFFRDGKNYLMLALVMVGSALVIALGLGKLFGWDIGLTAGMLAGSMTSTPVLVGAGDTLRHSGMESRQLSLALDNLSLGYALTYLIGLVSLIVGARYLPKLQHQDLQTSAQQIARERGLDTDANRKVYLPVIRAYRVGPELVAWTDGKNLRELGIYRQTGCYIERIRRNGILANPDGDAVLQMGDEIALVGYPDAHARLDPSFRNGKEVFDRDLLDMRIVTEEVVVKNHNAVGKRLAQLKLTDHGCFLNRVIRSQIEMPIDDNVVLNKGDVLQVSGDARRVKTIADRIGFISIHSQVTDLLAFCAFFVIGLMIGMITFQFSTFSFGMGNAAGLLFAGIMLGFMRANHPTFGYIPQGALSMVKEFGLMVFMAGVGLSAGSGINNGLGAIGGQMLIAGLIVSLVPVVICFLFGAYVLRMNRALLFGAMMGARTCAPAMEIISDTARSNIPALGYAGTYAIANVLLTLAGTIIVMVWPGLG</sequence>
<comment type="subcellular location">
    <subcellularLocation>
        <location evidence="1">Cell membrane</location>
        <topology evidence="1">Multi-pass membrane protein</topology>
    </subcellularLocation>
</comment>
<comment type="similarity">
    <text evidence="1">Belongs to the AAE transporter (TC 2.A.81) family. YbjL subfamily.</text>
</comment>
<keyword id="KW-1003">Cell membrane</keyword>
<keyword id="KW-0472">Membrane</keyword>
<keyword id="KW-0677">Repeat</keyword>
<keyword id="KW-0812">Transmembrane</keyword>
<keyword id="KW-1133">Transmembrane helix</keyword>
<keyword id="KW-0813">Transport</keyword>
<proteinExistence type="inferred from homology"/>
<dbReference type="EMBL" id="CP001396">
    <property type="protein sequence ID" value="ACR65161.1"/>
    <property type="molecule type" value="Genomic_DNA"/>
</dbReference>
<dbReference type="RefSeq" id="WP_001024876.1">
    <property type="nucleotide sequence ID" value="NC_012759.1"/>
</dbReference>
<dbReference type="SMR" id="C4ZY19"/>
<dbReference type="KEGG" id="ebw:BWG_0700"/>
<dbReference type="HOGENOM" id="CLU_035023_2_2_6"/>
<dbReference type="GO" id="GO:0005886">
    <property type="term" value="C:plasma membrane"/>
    <property type="evidence" value="ECO:0007669"/>
    <property type="project" value="UniProtKB-SubCell"/>
</dbReference>
<dbReference type="GO" id="GO:0008324">
    <property type="term" value="F:monoatomic cation transmembrane transporter activity"/>
    <property type="evidence" value="ECO:0007669"/>
    <property type="project" value="InterPro"/>
</dbReference>
<dbReference type="GO" id="GO:0006813">
    <property type="term" value="P:potassium ion transport"/>
    <property type="evidence" value="ECO:0007669"/>
    <property type="project" value="InterPro"/>
</dbReference>
<dbReference type="FunFam" id="3.30.70.1450:FF:000003">
    <property type="entry name" value="Putative transport protein YbjL"/>
    <property type="match status" value="1"/>
</dbReference>
<dbReference type="Gene3D" id="3.30.70.1450">
    <property type="entry name" value="Regulator of K+ conductance, C-terminal domain"/>
    <property type="match status" value="2"/>
</dbReference>
<dbReference type="HAMAP" id="MF_01015">
    <property type="entry name" value="YbjL"/>
    <property type="match status" value="1"/>
</dbReference>
<dbReference type="InterPro" id="IPR050144">
    <property type="entry name" value="AAE_transporter"/>
</dbReference>
<dbReference type="InterPro" id="IPR006037">
    <property type="entry name" value="RCK_C"/>
</dbReference>
<dbReference type="InterPro" id="IPR036721">
    <property type="entry name" value="RCK_C_sf"/>
</dbReference>
<dbReference type="InterPro" id="IPR023017">
    <property type="entry name" value="Transp_YbjL_put"/>
</dbReference>
<dbReference type="InterPro" id="IPR006512">
    <property type="entry name" value="YidE_YbjL"/>
</dbReference>
<dbReference type="NCBIfam" id="NF003440">
    <property type="entry name" value="PRK04972.1"/>
    <property type="match status" value="1"/>
</dbReference>
<dbReference type="NCBIfam" id="TIGR01625">
    <property type="entry name" value="YidE_YbjL_dupl"/>
    <property type="match status" value="2"/>
</dbReference>
<dbReference type="PANTHER" id="PTHR30445">
    <property type="entry name" value="K(+)_H(+) ANTIPORTER SUBUNIT KHTT"/>
    <property type="match status" value="1"/>
</dbReference>
<dbReference type="PANTHER" id="PTHR30445:SF10">
    <property type="entry name" value="TRANSPORT PROTEIN YBJL-RELATED"/>
    <property type="match status" value="1"/>
</dbReference>
<dbReference type="Pfam" id="PF06826">
    <property type="entry name" value="Asp-Al_Ex"/>
    <property type="match status" value="2"/>
</dbReference>
<dbReference type="Pfam" id="PF02080">
    <property type="entry name" value="TrkA_C"/>
    <property type="match status" value="2"/>
</dbReference>
<dbReference type="SUPFAM" id="SSF116726">
    <property type="entry name" value="TrkA C-terminal domain-like"/>
    <property type="match status" value="2"/>
</dbReference>
<dbReference type="PROSITE" id="PS51202">
    <property type="entry name" value="RCK_C"/>
    <property type="match status" value="2"/>
</dbReference>
<feature type="chain" id="PRO_1000213238" description="Putative transport protein YbjL">
    <location>
        <begin position="1"/>
        <end position="561"/>
    </location>
</feature>
<feature type="transmembrane region" description="Helical" evidence="1">
    <location>
        <begin position="8"/>
        <end position="28"/>
    </location>
</feature>
<feature type="transmembrane region" description="Helical" evidence="1">
    <location>
        <begin position="32"/>
        <end position="52"/>
    </location>
</feature>
<feature type="transmembrane region" description="Helical" evidence="1">
    <location>
        <begin position="66"/>
        <end position="86"/>
    </location>
</feature>
<feature type="transmembrane region" description="Helical" evidence="1">
    <location>
        <begin position="94"/>
        <end position="114"/>
    </location>
</feature>
<feature type="transmembrane region" description="Helical" evidence="1">
    <location>
        <begin position="158"/>
        <end position="178"/>
    </location>
</feature>
<feature type="transmembrane region" description="Helical" evidence="1">
    <location>
        <begin position="383"/>
        <end position="403"/>
    </location>
</feature>
<feature type="transmembrane region" description="Helical" evidence="1">
    <location>
        <begin position="406"/>
        <end position="426"/>
    </location>
</feature>
<feature type="transmembrane region" description="Helical" evidence="1">
    <location>
        <begin position="451"/>
        <end position="471"/>
    </location>
</feature>
<feature type="transmembrane region" description="Helical" evidence="1">
    <location>
        <begin position="475"/>
        <end position="495"/>
    </location>
</feature>
<feature type="transmembrane region" description="Helical" evidence="1">
    <location>
        <begin position="540"/>
        <end position="560"/>
    </location>
</feature>
<feature type="domain" description="RCK C-terminal 1" evidence="1">
    <location>
        <begin position="200"/>
        <end position="288"/>
    </location>
</feature>
<feature type="domain" description="RCK C-terminal 2" evidence="1">
    <location>
        <begin position="292"/>
        <end position="373"/>
    </location>
</feature>
<reference key="1">
    <citation type="journal article" date="2009" name="J. Bacteriol.">
        <title>Genomic sequencing reveals regulatory mutations and recombinational events in the widely used MC4100 lineage of Escherichia coli K-12.</title>
        <authorList>
            <person name="Ferenci T."/>
            <person name="Zhou Z."/>
            <person name="Betteridge T."/>
            <person name="Ren Y."/>
            <person name="Liu Y."/>
            <person name="Feng L."/>
            <person name="Reeves P.R."/>
            <person name="Wang L."/>
        </authorList>
    </citation>
    <scope>NUCLEOTIDE SEQUENCE [LARGE SCALE GENOMIC DNA]</scope>
    <source>
        <strain>K12 / MC4100 / BW2952</strain>
    </source>
</reference>